<reference key="1">
    <citation type="journal article" date="2009" name="J. Bacteriol.">
        <title>Genome sequences of three Agrobacterium biovars help elucidate the evolution of multichromosome genomes in bacteria.</title>
        <authorList>
            <person name="Slater S.C."/>
            <person name="Goldman B.S."/>
            <person name="Goodner B."/>
            <person name="Setubal J.C."/>
            <person name="Farrand S.K."/>
            <person name="Nester E.W."/>
            <person name="Burr T.J."/>
            <person name="Banta L."/>
            <person name="Dickerman A.W."/>
            <person name="Paulsen I."/>
            <person name="Otten L."/>
            <person name="Suen G."/>
            <person name="Welch R."/>
            <person name="Almeida N.F."/>
            <person name="Arnold F."/>
            <person name="Burton O.T."/>
            <person name="Du Z."/>
            <person name="Ewing A."/>
            <person name="Godsy E."/>
            <person name="Heisel S."/>
            <person name="Houmiel K.L."/>
            <person name="Jhaveri J."/>
            <person name="Lu J."/>
            <person name="Miller N.M."/>
            <person name="Norton S."/>
            <person name="Chen Q."/>
            <person name="Phoolcharoen W."/>
            <person name="Ohlin V."/>
            <person name="Ondrusek D."/>
            <person name="Pride N."/>
            <person name="Stricklin S.L."/>
            <person name="Sun J."/>
            <person name="Wheeler C."/>
            <person name="Wilson L."/>
            <person name="Zhu H."/>
            <person name="Wood D.W."/>
        </authorList>
    </citation>
    <scope>NUCLEOTIDE SEQUENCE [LARGE SCALE GENOMIC DNA]</scope>
    <source>
        <strain>K84 / ATCC BAA-868</strain>
    </source>
</reference>
<reference key="2">
    <citation type="journal article" date="2018" name="Nat. Chem. Biol.">
        <title>Functional assignment of multiple catabolic pathways for D-apiose.</title>
        <authorList>
            <person name="Carter M.S."/>
            <person name="Zhang X."/>
            <person name="Huang H."/>
            <person name="Bouvier J.T."/>
            <person name="Francisco B.S."/>
            <person name="Vetting M.W."/>
            <person name="Al-Obaidi N."/>
            <person name="Bonanno J.B."/>
            <person name="Ghosh A."/>
            <person name="Zallot R.G."/>
            <person name="Andersen H.M."/>
            <person name="Almo S.C."/>
            <person name="Gerlt J.A."/>
        </authorList>
    </citation>
    <scope>FUNCTION</scope>
    <scope>CATALYTIC ACTIVITY</scope>
    <scope>BIOPHYSICOCHEMICAL PROPERTIES</scope>
    <scope>PATHWAY</scope>
</reference>
<organism>
    <name type="scientific">Rhizobium rhizogenes (strain K84 / ATCC BAA-868)</name>
    <name type="common">Agrobacterium radiobacter</name>
    <dbReference type="NCBI Taxonomy" id="311403"/>
    <lineage>
        <taxon>Bacteria</taxon>
        <taxon>Pseudomonadati</taxon>
        <taxon>Pseudomonadota</taxon>
        <taxon>Alphaproteobacteria</taxon>
        <taxon>Hyphomicrobiales</taxon>
        <taxon>Rhizobiaceae</taxon>
        <taxon>Rhizobium/Agrobacterium group</taxon>
        <taxon>Rhizobium</taxon>
    </lineage>
</organism>
<name>APNO_RHIR8</name>
<accession>B9JK75</accession>
<keyword id="KW-0119">Carbohydrate metabolism</keyword>
<keyword id="KW-0479">Metal-binding</keyword>
<keyword id="KW-0520">NAD</keyword>
<keyword id="KW-0547">Nucleotide-binding</keyword>
<keyword id="KW-0560">Oxidoreductase</keyword>
<keyword id="KW-0862">Zinc</keyword>
<feature type="chain" id="PRO_0000446029" description="D-apionate oxidoisomerase">
    <location>
        <begin position="1"/>
        <end position="275"/>
    </location>
</feature>
<feature type="binding site" evidence="1">
    <location>
        <begin position="11"/>
        <end position="13"/>
    </location>
    <ligand>
        <name>NAD(+)</name>
        <dbReference type="ChEBI" id="CHEBI:57540"/>
    </ligand>
</feature>
<feature type="binding site" evidence="1">
    <location>
        <position position="32"/>
    </location>
    <ligand>
        <name>NAD(+)</name>
        <dbReference type="ChEBI" id="CHEBI:57540"/>
    </ligand>
</feature>
<feature type="binding site" evidence="1">
    <location>
        <position position="68"/>
    </location>
    <ligand>
        <name>NAD(+)</name>
        <dbReference type="ChEBI" id="CHEBI:57540"/>
    </ligand>
</feature>
<feature type="binding site" evidence="1">
    <location>
        <position position="113"/>
    </location>
    <ligand>
        <name>Zn(2+)</name>
        <dbReference type="ChEBI" id="CHEBI:29105"/>
    </ligand>
</feature>
<feature type="binding site" evidence="1">
    <location>
        <position position="183"/>
    </location>
    <ligand>
        <name>Zn(2+)</name>
        <dbReference type="ChEBI" id="CHEBI:29105"/>
    </ligand>
</feature>
<comment type="function">
    <text evidence="2">Involved in catabolism of D-apiose. Catalyzes the conversion of D-apionate to 3-oxo-isoapionate.</text>
</comment>
<comment type="catalytic activity">
    <reaction evidence="2">
        <text>D-apionate + NAD(+) = 3-oxoisoapionate + NADH + H(+)</text>
        <dbReference type="Rhea" id="RHEA:57044"/>
        <dbReference type="ChEBI" id="CHEBI:15378"/>
        <dbReference type="ChEBI" id="CHEBI:57540"/>
        <dbReference type="ChEBI" id="CHEBI:57945"/>
        <dbReference type="ChEBI" id="CHEBI:141352"/>
        <dbReference type="ChEBI" id="CHEBI:141353"/>
        <dbReference type="EC" id="1.1.1.421"/>
    </reaction>
</comment>
<comment type="cofactor">
    <cofactor evidence="1">
        <name>Zn(2+)</name>
        <dbReference type="ChEBI" id="CHEBI:29105"/>
    </cofactor>
</comment>
<comment type="biophysicochemical properties">
    <kinetics>
        <KM evidence="2">0.15 mM for D-apionate</KM>
        <text evidence="2">kcat is 1.3 sec(-1).</text>
    </kinetics>
</comment>
<comment type="pathway">
    <text evidence="2">Carbohydrate metabolism.</text>
</comment>
<comment type="similarity">
    <text evidence="4">Belongs to the ApnO family.</text>
</comment>
<evidence type="ECO:0000250" key="1">
    <source>
        <dbReference type="UniProtKB" id="F8GV06"/>
    </source>
</evidence>
<evidence type="ECO:0000269" key="2">
    <source>
    </source>
</evidence>
<evidence type="ECO:0000303" key="3">
    <source>
    </source>
</evidence>
<evidence type="ECO:0000305" key="4"/>
<evidence type="ECO:0000312" key="5">
    <source>
        <dbReference type="EMBL" id="ACM30317.1"/>
    </source>
</evidence>
<gene>
    <name evidence="3" type="primary">apnO</name>
    <name evidence="5" type="ordered locus">Arad_9232</name>
</gene>
<protein>
    <recommendedName>
        <fullName evidence="3">D-apionate oxidoisomerase</fullName>
        <ecNumber evidence="2">1.1.1.421</ecNumber>
    </recommendedName>
</protein>
<dbReference type="EC" id="1.1.1.421" evidence="2"/>
<dbReference type="EMBL" id="CP000629">
    <property type="protein sequence ID" value="ACM30317.1"/>
    <property type="molecule type" value="Genomic_DNA"/>
</dbReference>
<dbReference type="RefSeq" id="WP_015917645.1">
    <property type="nucleotide sequence ID" value="NC_011983.1"/>
</dbReference>
<dbReference type="SMR" id="B9JK75"/>
<dbReference type="STRING" id="311403.Arad_9232"/>
<dbReference type="KEGG" id="ara:Arad_9232"/>
<dbReference type="eggNOG" id="COG0287">
    <property type="taxonomic scope" value="Bacteria"/>
</dbReference>
<dbReference type="HOGENOM" id="CLU_087850_0_0_5"/>
<dbReference type="BioCyc" id="MetaCyc:MONOMER-20960"/>
<dbReference type="BRENDA" id="1.1.1.421">
    <property type="organism ID" value="200"/>
</dbReference>
<dbReference type="SABIO-RK" id="B9JK75"/>
<dbReference type="Proteomes" id="UP000001600">
    <property type="component" value="Chromosome 2"/>
</dbReference>
<dbReference type="GO" id="GO:0046872">
    <property type="term" value="F:metal ion binding"/>
    <property type="evidence" value="ECO:0007669"/>
    <property type="project" value="UniProtKB-KW"/>
</dbReference>
<dbReference type="GO" id="GO:0050661">
    <property type="term" value="F:NADP binding"/>
    <property type="evidence" value="ECO:0007669"/>
    <property type="project" value="InterPro"/>
</dbReference>
<dbReference type="GO" id="GO:0016491">
    <property type="term" value="F:oxidoreductase activity"/>
    <property type="evidence" value="ECO:0007669"/>
    <property type="project" value="UniProtKB-KW"/>
</dbReference>
<dbReference type="Gene3D" id="3.40.50.720">
    <property type="entry name" value="NAD(P)-binding Rossmann-like Domain"/>
    <property type="match status" value="1"/>
</dbReference>
<dbReference type="Gene3D" id="1.10.3640.10">
    <property type="entry name" value="Semialdehyde dehydrogenase-like, C-terminal"/>
    <property type="match status" value="1"/>
</dbReference>
<dbReference type="InterPro" id="IPR006115">
    <property type="entry name" value="6PGDH_NADP-bd"/>
</dbReference>
<dbReference type="InterPro" id="IPR036291">
    <property type="entry name" value="NAD(P)-bd_dom_sf"/>
</dbReference>
<dbReference type="InterPro" id="IPR031663">
    <property type="entry name" value="PGDH_C"/>
</dbReference>
<dbReference type="InterPro" id="IPR037161">
    <property type="entry name" value="Semialdehyde_DH-like_C"/>
</dbReference>
<dbReference type="Pfam" id="PF03446">
    <property type="entry name" value="NAD_binding_2"/>
    <property type="match status" value="1"/>
</dbReference>
<dbReference type="Pfam" id="PF16896">
    <property type="entry name" value="PGDH_C"/>
    <property type="match status" value="1"/>
</dbReference>
<dbReference type="SUPFAM" id="SSF51735">
    <property type="entry name" value="NAD(P)-binding Rossmann-fold domains"/>
    <property type="match status" value="1"/>
</dbReference>
<proteinExistence type="evidence at protein level"/>
<sequence>MTVIALFGAGGKMGYRLAKNLKGSRFDVRHVEVSDAGKARLKNDLDLSCVPVDEALNGAEVVILAVPDTAIGKVAAGIVDKLKPGTMVVALDAAAPFAGHLPKRDELTYFVTHPCHPPIFNDETDMQAKKDHFGGLFAKQHIVSALMQGPESAYALGEEIAKVIWAPVMRSHRVTVEQMAMLEPGLSETVCASLLVVMRQAMDECVARGVPEDAARDFLLGHMNVLGAVIFKEVDGVFSDACNKAIEFGIPALMRDDWKNVFEPKEIAASIQRIT</sequence>